<gene>
    <name type="primary">tlcd4b</name>
    <name type="synonym">tmem56</name>
    <name type="synonym">tmem56b</name>
    <name type="ORF">zgc:92864</name>
</gene>
<accession>Q5XIY2</accession>
<dbReference type="EMBL" id="BC083537">
    <property type="protein sequence ID" value="AAH83537.1"/>
    <property type="molecule type" value="mRNA"/>
</dbReference>
<dbReference type="RefSeq" id="NP_001005924.1">
    <property type="nucleotide sequence ID" value="NM_001005924.2"/>
</dbReference>
<dbReference type="RefSeq" id="XP_005168534.1">
    <property type="nucleotide sequence ID" value="XM_005168477.3"/>
</dbReference>
<dbReference type="FunCoup" id="Q5XIY2">
    <property type="interactions" value="90"/>
</dbReference>
<dbReference type="STRING" id="7955.ENSDARP00000130550"/>
<dbReference type="PaxDb" id="7955-ENSDARP00000112952"/>
<dbReference type="Ensembl" id="ENSDART00000165452">
    <property type="protein sequence ID" value="ENSDARP00000130550"/>
    <property type="gene ID" value="ENSDARG00000098224"/>
</dbReference>
<dbReference type="Ensembl" id="ENSDART00000171726">
    <property type="protein sequence ID" value="ENSDARP00000133377"/>
    <property type="gene ID" value="ENSDARG00000098224"/>
</dbReference>
<dbReference type="GeneID" id="449652"/>
<dbReference type="KEGG" id="dre:449652"/>
<dbReference type="AGR" id="ZFIN:ZDB-GENE-041010-90"/>
<dbReference type="CTD" id="449652"/>
<dbReference type="ZFIN" id="ZDB-GENE-041010-90">
    <property type="gene designation" value="tlcd4b"/>
</dbReference>
<dbReference type="eggNOG" id="KOG4561">
    <property type="taxonomic scope" value="Eukaryota"/>
</dbReference>
<dbReference type="HOGENOM" id="CLU_034597_2_0_1"/>
<dbReference type="InParanoid" id="Q5XIY2"/>
<dbReference type="OMA" id="HANNHTD"/>
<dbReference type="OrthoDB" id="10266980at2759"/>
<dbReference type="PhylomeDB" id="Q5XIY2"/>
<dbReference type="TreeFam" id="TF324847"/>
<dbReference type="PRO" id="PR:Q5XIY2"/>
<dbReference type="Proteomes" id="UP000000437">
    <property type="component" value="Chromosome 3"/>
</dbReference>
<dbReference type="ExpressionAtlas" id="Q5XIY2">
    <property type="expression patterns" value="baseline and differential"/>
</dbReference>
<dbReference type="GO" id="GO:0005783">
    <property type="term" value="C:endoplasmic reticulum"/>
    <property type="evidence" value="ECO:0000318"/>
    <property type="project" value="GO_Central"/>
</dbReference>
<dbReference type="GO" id="GO:0016020">
    <property type="term" value="C:membrane"/>
    <property type="evidence" value="ECO:0007669"/>
    <property type="project" value="UniProtKB-SubCell"/>
</dbReference>
<dbReference type="GO" id="GO:0055088">
    <property type="term" value="P:lipid homeostasis"/>
    <property type="evidence" value="ECO:0000318"/>
    <property type="project" value="GO_Central"/>
</dbReference>
<dbReference type="InterPro" id="IPR006634">
    <property type="entry name" value="TLC-dom"/>
</dbReference>
<dbReference type="InterPro" id="IPR050846">
    <property type="entry name" value="TLCD"/>
</dbReference>
<dbReference type="PANTHER" id="PTHR13439">
    <property type="entry name" value="CT120 PROTEIN"/>
    <property type="match status" value="1"/>
</dbReference>
<dbReference type="PANTHER" id="PTHR13439:SF49">
    <property type="entry name" value="TLC DOMAIN-CONTAINING PROTEIN 4-B"/>
    <property type="match status" value="1"/>
</dbReference>
<dbReference type="Pfam" id="PF03798">
    <property type="entry name" value="TRAM_LAG1_CLN8"/>
    <property type="match status" value="1"/>
</dbReference>
<dbReference type="SMART" id="SM00724">
    <property type="entry name" value="TLC"/>
    <property type="match status" value="1"/>
</dbReference>
<dbReference type="PROSITE" id="PS50922">
    <property type="entry name" value="TLC"/>
    <property type="match status" value="1"/>
</dbReference>
<protein>
    <recommendedName>
        <fullName evidence="3">TLC domain-containing protein 4-B</fullName>
    </recommendedName>
    <alternativeName>
        <fullName>Transmembrane protein 56-B</fullName>
    </alternativeName>
</protein>
<proteinExistence type="evidence at transcript level"/>
<evidence type="ECO:0000255" key="1"/>
<evidence type="ECO:0000255" key="2">
    <source>
        <dbReference type="PROSITE-ProRule" id="PRU00205"/>
    </source>
</evidence>
<evidence type="ECO:0000305" key="3"/>
<organism>
    <name type="scientific">Danio rerio</name>
    <name type="common">Zebrafish</name>
    <name type="synonym">Brachydanio rerio</name>
    <dbReference type="NCBI Taxonomy" id="7955"/>
    <lineage>
        <taxon>Eukaryota</taxon>
        <taxon>Metazoa</taxon>
        <taxon>Chordata</taxon>
        <taxon>Craniata</taxon>
        <taxon>Vertebrata</taxon>
        <taxon>Euteleostomi</taxon>
        <taxon>Actinopterygii</taxon>
        <taxon>Neopterygii</taxon>
        <taxon>Teleostei</taxon>
        <taxon>Ostariophysi</taxon>
        <taxon>Cypriniformes</taxon>
        <taxon>Danionidae</taxon>
        <taxon>Danioninae</taxon>
        <taxon>Danio</taxon>
    </lineage>
</organism>
<feature type="chain" id="PRO_0000286703" description="TLC domain-containing protein 4-B">
    <location>
        <begin position="1"/>
        <end position="264"/>
    </location>
</feature>
<feature type="transmembrane region" description="Helical" evidence="1">
    <location>
        <begin position="6"/>
        <end position="26"/>
    </location>
</feature>
<feature type="transmembrane region" description="Helical" evidence="1">
    <location>
        <begin position="50"/>
        <end position="70"/>
    </location>
</feature>
<feature type="transmembrane region" description="Helical" evidence="1">
    <location>
        <begin position="84"/>
        <end position="104"/>
    </location>
</feature>
<feature type="transmembrane region" description="Helical" evidence="1">
    <location>
        <begin position="110"/>
        <end position="130"/>
    </location>
</feature>
<feature type="transmembrane region" description="Helical" evidence="1">
    <location>
        <begin position="169"/>
        <end position="189"/>
    </location>
</feature>
<feature type="transmembrane region" description="Helical" evidence="1">
    <location>
        <begin position="210"/>
        <end position="230"/>
    </location>
</feature>
<feature type="domain" description="TLC" evidence="2">
    <location>
        <begin position="41"/>
        <end position="243"/>
    </location>
</feature>
<reference key="1">
    <citation type="submission" date="2004-10" db="EMBL/GenBank/DDBJ databases">
        <authorList>
            <consortium name="NIH - Zebrafish Gene Collection (ZGC) project"/>
        </authorList>
    </citation>
    <scope>NUCLEOTIDE SEQUENCE [LARGE SCALE MRNA]</scope>
    <source>
        <tissue>Brain</tissue>
    </source>
</reference>
<keyword id="KW-0472">Membrane</keyword>
<keyword id="KW-1185">Reference proteome</keyword>
<keyword id="KW-0812">Transmembrane</keyword>
<keyword id="KW-1133">Transmembrane helix</keyword>
<name>TLC4B_DANRE</name>
<sequence>MDMREVYVVAGSFVGFQLFFSCVSPVLSSNFTQGYGKLPPNKLNDWNSRLVSTVHALIVGLFCLYILWYDDAVNEDPVWGDPNLVKLNVAITCGYLFYDLLLLACNWSTMGDVFFVCHHLAALYAYGYVLTRGVLPYFANFRLISELSTPFVNQRWFFEALAYPRTHQLVVANGIAMAVVFFLVRIAVMPPYWAKVFGIIYSPTFEKLGLAIQVAWIISCVCLDILNIIWMYKIARGCYKVITGKLKGRKADSKKTTCVNNHTD</sequence>
<comment type="subcellular location">
    <subcellularLocation>
        <location evidence="3">Membrane</location>
        <topology evidence="3">Multi-pass membrane protein</topology>
    </subcellularLocation>
</comment>
<comment type="similarity">
    <text evidence="3">Belongs to the TLCD4 family.</text>
</comment>